<proteinExistence type="evidence at protein level"/>
<keyword id="KW-0002">3D-structure</keyword>
<keyword id="KW-0028">Amino-acid biosynthesis</keyword>
<keyword id="KW-0057">Aromatic amino acid biosynthesis</keyword>
<keyword id="KW-0520">NAD</keyword>
<keyword id="KW-0560">Oxidoreductase</keyword>
<keyword id="KW-1185">Reference proteome</keyword>
<protein>
    <recommendedName>
        <fullName evidence="5">Quinate/shikimate dehydrogenase (NAD(+))</fullName>
        <shortName evidence="6">QSDH</shortName>
        <ecNumber evidence="3 4">1.1.1.-</ecNumber>
        <ecNumber evidence="3 4">1.1.1.24</ecNumber>
    </recommendedName>
</protein>
<organism>
    <name type="scientific">Corynebacterium glutamicum (strain ATCC 13032 / DSM 20300 / JCM 1318 / BCRC 11384 / CCUG 27702 / LMG 3730 / NBRC 12168 / NCIMB 10025 / NRRL B-2784 / 534)</name>
    <dbReference type="NCBI Taxonomy" id="196627"/>
    <lineage>
        <taxon>Bacteria</taxon>
        <taxon>Bacillati</taxon>
        <taxon>Actinomycetota</taxon>
        <taxon>Actinomycetes</taxon>
        <taxon>Mycobacteriales</taxon>
        <taxon>Corynebacteriaceae</taxon>
        <taxon>Corynebacterium</taxon>
    </lineage>
</organism>
<name>AROE_CORGL</name>
<accession>Q9X5C9</accession>
<reference key="1">
    <citation type="submission" date="1999-01" db="EMBL/GenBank/DDBJ databases">
        <title>The cloning and phylogenetic analysis of the 3-dehydroquinase gene from Corynebacterium glutamicum.</title>
        <authorList>
            <person name="Joy J."/>
            <person name="O'Donohue M."/>
            <person name="Dunican L.K."/>
        </authorList>
    </citation>
    <scope>NUCLEOTIDE SEQUENCE [GENOMIC DNA]</scope>
    <source>
        <strain>ATCC 13059 / LMG 3658 / NCIB 10332 / AS019 / 613</strain>
    </source>
</reference>
<reference evidence="8" key="2">
    <citation type="journal article" date="2003" name="Appl. Microbiol. Biotechnol.">
        <title>The Corynebacterium glutamicum genome: features and impacts on biotechnological processes.</title>
        <authorList>
            <person name="Ikeda M."/>
            <person name="Nakagawa S."/>
        </authorList>
    </citation>
    <scope>NUCLEOTIDE SEQUENCE [LARGE SCALE GENOMIC DNA]</scope>
    <source>
        <strain>ATCC 13032 / DSM 20300 / JCM 1318 / BCRC 11384 / CCUG 27702 / LMG 3730 / NBRC 12168 / NCIMB 10025 / NRRL B-2784 / 534</strain>
    </source>
</reference>
<reference evidence="9" key="3">
    <citation type="journal article" date="2003" name="J. Biotechnol.">
        <title>The complete Corynebacterium glutamicum ATCC 13032 genome sequence and its impact on the production of L-aspartate-derived amino acids and vitamins.</title>
        <authorList>
            <person name="Kalinowski J."/>
            <person name="Bathe B."/>
            <person name="Bartels D."/>
            <person name="Bischoff N."/>
            <person name="Bott M."/>
            <person name="Burkovski A."/>
            <person name="Dusch N."/>
            <person name="Eggeling L."/>
            <person name="Eikmanns B.J."/>
            <person name="Gaigalat L."/>
            <person name="Goesmann A."/>
            <person name="Hartmann M."/>
            <person name="Huthmacher K."/>
            <person name="Kraemer R."/>
            <person name="Linke B."/>
            <person name="McHardy A.C."/>
            <person name="Meyer F."/>
            <person name="Moeckel B."/>
            <person name="Pfefferle W."/>
            <person name="Puehler A."/>
            <person name="Rey D.A."/>
            <person name="Rueckert C."/>
            <person name="Rupp O."/>
            <person name="Sahm H."/>
            <person name="Wendisch V.F."/>
            <person name="Wiegraebe I."/>
            <person name="Tauch A."/>
        </authorList>
    </citation>
    <scope>NUCLEOTIDE SEQUENCE [LARGE SCALE GENOMIC DNA]</scope>
    <source>
        <strain>ATCC 13032 / DSM 20300 / JCM 1318 / BCRC 11384 / CCUG 27702 / LMG 3730 / NBRC 12168 / NCIMB 10025 / NRRL B-2784 / 534</strain>
    </source>
</reference>
<reference evidence="10" key="4">
    <citation type="journal article" date="2008" name="Acta Crystallogr. D">
        <title>1.6 Angstroms structure of an NAD(+)-dependent quinate dehydrogenase from Corynebacterium glutamicum.</title>
        <authorList>
            <person name="Schoepe J."/>
            <person name="Niefind K."/>
            <person name="Schomburg D."/>
        </authorList>
    </citation>
    <scope>X-RAY CRYSTALLOGRAPHY (1.64 ANGSTROMS)</scope>
    <scope>FUNCTION</scope>
    <scope>CATALYTIC ACTIVITY</scope>
    <scope>BIOPHYSICOCHEMICAL PROPERTIES</scope>
    <scope>SUBUNIT</scope>
    <scope>REACTION MECHANISM</scope>
    <source>
        <strain>ATCC 13032 / DSM 20300 / JCM 1318 / BCRC 11384 / CCUG 27702 / LMG 3730 / NBRC 12168 / NCIMB 10025 / NRRL B-2784 / 534</strain>
    </source>
</reference>
<reference evidence="11 12 13" key="5">
    <citation type="journal article" date="2013" name="Biol. Chem.">
        <title>Enzyme-substrate complexes of the quinate/shikimate dehydrogenase from Corynebacterium glutamicum enable new insights in substrate and cofactor binding, specificity, and discrimination.</title>
        <authorList>
            <person name="Hoppner A."/>
            <person name="Schomburg D."/>
            <person name="Niefind K."/>
        </authorList>
    </citation>
    <scope>X-RAY CRYSTALLOGRAPHY (1.00 ANGSTROMS)IN COMPLEX WITH SHIKIMATE; (-)-QUINATE AND NAD</scope>
    <scope>FUNCTION</scope>
    <scope>CATALYTIC ACTIVITY</scope>
    <scope>ACTIVE SITE</scope>
    <scope>BIOPHYSICOCHEMICAL PROPERTIES</scope>
    <scope>SUBSTRATE SPECIFICITY</scope>
    <scope>SUBUNIT</scope>
    <source>
        <strain>ATCC 13032 / DSM 20300 / JCM 1318 / BCRC 11384 / CCUG 27702 / LMG 3730 / NBRC 12168 / NCIMB 10025 / NRRL B-2784 / 534</strain>
    </source>
</reference>
<comment type="function">
    <text evidence="3 4">Involved in the biosynthesis of the chorismate, which leads to the biosynthesis of aromatic amino acids, and plays a key role in the quinate degradation pathway. Catalyzes the NAD(+)-dependent oxidation of both quinate and shikimate to 3-dehydroquinate and 3-dehydroshikimate, respectively. It can only use NAD.</text>
</comment>
<comment type="catalytic activity">
    <reaction evidence="3 4">
        <text>L-quinate + NAD(+) = 3-dehydroquinate + NADH + H(+)</text>
        <dbReference type="Rhea" id="RHEA:22364"/>
        <dbReference type="ChEBI" id="CHEBI:15378"/>
        <dbReference type="ChEBI" id="CHEBI:29751"/>
        <dbReference type="ChEBI" id="CHEBI:32364"/>
        <dbReference type="ChEBI" id="CHEBI:57540"/>
        <dbReference type="ChEBI" id="CHEBI:57945"/>
        <dbReference type="EC" id="1.1.1.24"/>
    </reaction>
</comment>
<comment type="catalytic activity">
    <reaction evidence="3 4">
        <text>shikimate + NAD(+) = 3-dehydroshikimate + NADH + H(+)</text>
        <dbReference type="Rhea" id="RHEA:17741"/>
        <dbReference type="ChEBI" id="CHEBI:15378"/>
        <dbReference type="ChEBI" id="CHEBI:16630"/>
        <dbReference type="ChEBI" id="CHEBI:36208"/>
        <dbReference type="ChEBI" id="CHEBI:57540"/>
        <dbReference type="ChEBI" id="CHEBI:57945"/>
    </reaction>
</comment>
<comment type="biophysicochemical properties">
    <kinetics>
        <KM evidence="4">0.13 mM for NAD (with 16 mM quinate at pH 7.5)</KM>
        <KM evidence="4">0.28 mM for NAD (with 16 mM quinate at pH 9)</KM>
        <KM evidence="4">0.46 mM for NAD (with 60 mM shikimate at pH 9)</KM>
        <KM evidence="4">0.87 mM for NAD (with 60 mM shikimate at pH 7.5)</KM>
        <KM evidence="4">1.56 mM for quinate (at pH 7.5)</KM>
        <KM evidence="4">2.37 mM for quinate (at pH 9)</KM>
        <KM evidence="4">10.16 mM for shikimate(at pH 7.5)</KM>
        <KM evidence="3">10.2 mM for quinate</KM>
        <KM evidence="3">46.6 mM for shikimate</KM>
        <KM evidence="4">53.8 mM for shikimate(at pH 10)</KM>
        <text evidence="3 4">The catalytic efficiency with quinate is 3.3-fold higher than that with shikimate. With NADP(+) instead of NAD(+) as cosubstrate, activity decreases by more than 300-fold with either shikimate or quinate as a substrate.</text>
    </kinetics>
    <phDependence>
        <text evidence="3 4">Optimum pH is 9-10.</text>
    </phDependence>
</comment>
<comment type="pathway">
    <text evidence="7">Metabolic intermediate biosynthesis; chorismate biosynthesis; chorismate from D-erythrose 4-phosphate and phosphoenolpyruvate: step 4/7.</text>
</comment>
<comment type="pathway">
    <text evidence="7">Aromatic compound metabolism; 3,4-dihydroxybenzoate biosynthesis; 3-dehydroquinate from D-quinate (NAD(+) route).</text>
</comment>
<comment type="subunit">
    <text evidence="2 3 4">Homodimer.</text>
</comment>
<comment type="induction">
    <text evidence="1">By shikimate, quinate and QsuR.</text>
</comment>
<comment type="miscellaneous">
    <text evidence="3 4">Has a different substrate and cosubstrate specificities relative to all other known bacterial shikimate/quinate dehydrogenases.</text>
</comment>
<comment type="similarity">
    <text evidence="2">Belongs to the shikimate dehydrogenase family.</text>
</comment>
<feature type="chain" id="PRO_0000136001" description="Quinate/shikimate dehydrogenase (NAD(+))">
    <location>
        <begin position="1"/>
        <end position="283"/>
    </location>
</feature>
<feature type="active site" description="Proton acceptor" evidence="2 4">
    <location>
        <position position="73"/>
    </location>
</feature>
<feature type="binding site" evidence="4 12">
    <location>
        <begin position="17"/>
        <end position="19"/>
    </location>
    <ligand>
        <name>L-quinate</name>
        <dbReference type="ChEBI" id="CHEBI:29751"/>
    </ligand>
</feature>
<feature type="binding site" evidence="4 13">
    <location>
        <position position="17"/>
    </location>
    <ligand>
        <name>shikimate</name>
        <dbReference type="ChEBI" id="CHEBI:36208"/>
    </ligand>
</feature>
<feature type="binding site" evidence="4 12">
    <location>
        <position position="69"/>
    </location>
    <ligand>
        <name>L-quinate</name>
        <dbReference type="ChEBI" id="CHEBI:29751"/>
    </ligand>
</feature>
<feature type="binding site" evidence="4 13">
    <location>
        <position position="69"/>
    </location>
    <ligand>
        <name>shikimate</name>
        <dbReference type="ChEBI" id="CHEBI:36208"/>
    </ligand>
</feature>
<feature type="binding site" evidence="4 12">
    <location>
        <position position="73"/>
    </location>
    <ligand>
        <name>L-quinate</name>
        <dbReference type="ChEBI" id="CHEBI:29751"/>
    </ligand>
</feature>
<feature type="binding site" evidence="4 13">
    <location>
        <position position="73"/>
    </location>
    <ligand>
        <name>shikimate</name>
        <dbReference type="ChEBI" id="CHEBI:36208"/>
    </ligand>
</feature>
<feature type="binding site" evidence="4 12">
    <location>
        <position position="94"/>
    </location>
    <ligand>
        <name>L-quinate</name>
        <dbReference type="ChEBI" id="CHEBI:29751"/>
    </ligand>
</feature>
<feature type="binding site" evidence="4 13">
    <location>
        <position position="94"/>
    </location>
    <ligand>
        <name>shikimate</name>
        <dbReference type="ChEBI" id="CHEBI:36208"/>
    </ligand>
</feature>
<feature type="binding site" evidence="4 12">
    <location>
        <position position="110"/>
    </location>
    <ligand>
        <name>L-quinate</name>
        <dbReference type="ChEBI" id="CHEBI:29751"/>
    </ligand>
</feature>
<feature type="binding site" evidence="4 13">
    <location>
        <position position="110"/>
    </location>
    <ligand>
        <name>shikimate</name>
        <dbReference type="ChEBI" id="CHEBI:36208"/>
    </ligand>
</feature>
<feature type="binding site" evidence="2 4 11 12 13">
    <location>
        <begin position="137"/>
        <end position="138"/>
    </location>
    <ligand>
        <name>NAD(+)</name>
        <dbReference type="ChEBI" id="CHEBI:57540"/>
    </ligand>
</feature>
<feature type="binding site" evidence="4 11 12 13">
    <location>
        <position position="158"/>
    </location>
    <ligand>
        <name>NAD(+)</name>
        <dbReference type="ChEBI" id="CHEBI:57540"/>
    </ligand>
</feature>
<feature type="binding site" evidence="4 11 12 13">
    <location>
        <position position="163"/>
    </location>
    <ligand>
        <name>NAD(+)</name>
        <dbReference type="ChEBI" id="CHEBI:57540"/>
    </ligand>
</feature>
<feature type="binding site" evidence="4 11 12 13">
    <location>
        <begin position="203"/>
        <end position="206"/>
    </location>
    <ligand>
        <name>NAD(+)</name>
        <dbReference type="ChEBI" id="CHEBI:57540"/>
    </ligand>
</feature>
<feature type="binding site" evidence="4 12 13">
    <location>
        <position position="213"/>
    </location>
    <ligand>
        <name>NAD(+)</name>
        <dbReference type="ChEBI" id="CHEBI:57540"/>
    </ligand>
</feature>
<feature type="binding site" evidence="2 4 11 12 13">
    <location>
        <position position="228"/>
    </location>
    <ligand>
        <name>NAD(+)</name>
        <dbReference type="ChEBI" id="CHEBI:57540"/>
    </ligand>
</feature>
<feature type="binding site" evidence="2 4 11 12 13">
    <location>
        <position position="251"/>
    </location>
    <ligand>
        <name>NAD(+)</name>
        <dbReference type="ChEBI" id="CHEBI:57540"/>
    </ligand>
</feature>
<feature type="binding site" evidence="4 12">
    <location>
        <position position="258"/>
    </location>
    <ligand>
        <name>L-quinate</name>
        <dbReference type="ChEBI" id="CHEBI:29751"/>
    </ligand>
</feature>
<feature type="binding site" evidence="4 13">
    <location>
        <position position="258"/>
    </location>
    <ligand>
        <name>shikimate</name>
        <dbReference type="ChEBI" id="CHEBI:36208"/>
    </ligand>
</feature>
<feature type="sequence conflict" description="In Ref. 1; AAD30993." evidence="7" ref="1">
    <original>A</original>
    <variation>P</variation>
    <location>
        <position position="29"/>
    </location>
</feature>
<feature type="sequence conflict" description="In Ref. 1; AAD30993." evidence="7" ref="1">
    <original>AGGVGNAVA</original>
    <variation>RRRRKRSR</variation>
    <location>
        <begin position="135"/>
        <end position="143"/>
    </location>
</feature>
<feature type="sequence conflict" description="In Ref. 1; AAD30993." evidence="7" ref="1">
    <location>
        <position position="211"/>
    </location>
</feature>
<feature type="sequence conflict" description="In Ref. 1; AAD30993." evidence="7" ref="1">
    <original>DV</original>
    <variation>T</variation>
    <location>
        <begin position="272"/>
        <end position="273"/>
    </location>
</feature>
<feature type="strand" evidence="15">
    <location>
        <begin position="5"/>
        <end position="13"/>
    </location>
</feature>
<feature type="helix" evidence="15">
    <location>
        <begin position="19"/>
        <end position="29"/>
    </location>
</feature>
<feature type="strand" evidence="15">
    <location>
        <begin position="34"/>
        <end position="40"/>
    </location>
</feature>
<feature type="turn" evidence="15">
    <location>
        <begin position="44"/>
        <end position="48"/>
    </location>
</feature>
<feature type="helix" evidence="15">
    <location>
        <begin position="51"/>
        <end position="60"/>
    </location>
</feature>
<feature type="strand" evidence="15">
    <location>
        <begin position="65"/>
        <end position="68"/>
    </location>
</feature>
<feature type="turn" evidence="15">
    <location>
        <begin position="73"/>
        <end position="76"/>
    </location>
</feature>
<feature type="helix" evidence="15">
    <location>
        <begin position="77"/>
        <end position="79"/>
    </location>
</feature>
<feature type="strand" evidence="15">
    <location>
        <begin position="80"/>
        <end position="83"/>
    </location>
</feature>
<feature type="helix" evidence="15">
    <location>
        <begin position="85"/>
        <end position="90"/>
    </location>
</feature>
<feature type="strand" evidence="15">
    <location>
        <begin position="95"/>
        <end position="98"/>
    </location>
</feature>
<feature type="strand" evidence="15">
    <location>
        <begin position="104"/>
        <end position="107"/>
    </location>
</feature>
<feature type="helix" evidence="15">
    <location>
        <begin position="109"/>
        <end position="121"/>
    </location>
</feature>
<feature type="strand" evidence="15">
    <location>
        <begin position="128"/>
        <end position="133"/>
    </location>
</feature>
<feature type="helix" evidence="15">
    <location>
        <begin position="137"/>
        <end position="148"/>
    </location>
</feature>
<feature type="strand" evidence="15">
    <location>
        <begin position="152"/>
        <end position="157"/>
    </location>
</feature>
<feature type="helix" evidence="15">
    <location>
        <begin position="161"/>
        <end position="175"/>
    </location>
</feature>
<feature type="strand" evidence="15">
    <location>
        <begin position="180"/>
        <end position="182"/>
    </location>
</feature>
<feature type="helix" evidence="15">
    <location>
        <begin position="188"/>
        <end position="194"/>
    </location>
</feature>
<feature type="strand" evidence="15">
    <location>
        <begin position="195"/>
        <end position="200"/>
    </location>
</feature>
<feature type="helix" evidence="15">
    <location>
        <begin position="216"/>
        <end position="218"/>
    </location>
</feature>
<feature type="strand" evidence="15">
    <location>
        <begin position="224"/>
        <end position="227"/>
    </location>
</feature>
<feature type="strand" evidence="15">
    <location>
        <begin position="231"/>
        <end position="234"/>
    </location>
</feature>
<feature type="helix" evidence="15">
    <location>
        <begin position="236"/>
        <end position="243"/>
    </location>
</feature>
<feature type="strand" evidence="14">
    <location>
        <begin position="247"/>
        <end position="249"/>
    </location>
</feature>
<feature type="helix" evidence="15">
    <location>
        <begin position="252"/>
        <end position="267"/>
    </location>
</feature>
<feature type="helix" evidence="15">
    <location>
        <begin position="273"/>
        <end position="281"/>
    </location>
</feature>
<sequence>MNDSILLGLIGQGLDLSRTPAMHEAEGLAQGRATVYRRIDTLGSRASGQDLKTLLDAALYLGFNGLNITHPYKQAVLPLLDEVSEQATQLGAVNTVVIDATGHTTGHNTDVSGFGRGMEEGLPNAKLDSVVQVGAGGVGNAVAYALVTHGVQKLQVADLDTSRAQALADVINNAVGREAVVGVDARGIEDVIAAADGVVNATPMGMPAHPGTAFDVSCLTKDHWVGDVVYMPIETELLKAARALGCETLDGTRMAIHQAVDAFRLFTGLEPDVSRMRETFLSL</sequence>
<dbReference type="EC" id="1.1.1.-" evidence="3 4"/>
<dbReference type="EC" id="1.1.1.24" evidence="3 4"/>
<dbReference type="EMBL" id="AF124518">
    <property type="protein sequence ID" value="AAD30993.1"/>
    <property type="molecule type" value="Genomic_DNA"/>
</dbReference>
<dbReference type="EMBL" id="BA000036">
    <property type="protein sequence ID" value="BAB97817.1"/>
    <property type="molecule type" value="Genomic_DNA"/>
</dbReference>
<dbReference type="EMBL" id="BX927149">
    <property type="protein sequence ID" value="CAF19140.1"/>
    <property type="molecule type" value="Genomic_DNA"/>
</dbReference>
<dbReference type="RefSeq" id="NP_599671.1">
    <property type="nucleotide sequence ID" value="NC_003450.3"/>
</dbReference>
<dbReference type="RefSeq" id="WP_011013640.1">
    <property type="nucleotide sequence ID" value="NC_006958.1"/>
</dbReference>
<dbReference type="PDB" id="2NLO">
    <property type="method" value="X-ray"/>
    <property type="resolution" value="1.64 A"/>
    <property type="chains" value="A=1-283"/>
</dbReference>
<dbReference type="PDB" id="3JYO">
    <property type="method" value="X-ray"/>
    <property type="resolution" value="1.00 A"/>
    <property type="chains" value="A=1-283"/>
</dbReference>
<dbReference type="PDB" id="3JYP">
    <property type="method" value="X-ray"/>
    <property type="resolution" value="1.16 A"/>
    <property type="chains" value="A=1-283"/>
</dbReference>
<dbReference type="PDB" id="3JYQ">
    <property type="method" value="X-ray"/>
    <property type="resolution" value="1.16 A"/>
    <property type="chains" value="A=1-283"/>
</dbReference>
<dbReference type="PDBsum" id="2NLO"/>
<dbReference type="PDBsum" id="3JYO"/>
<dbReference type="PDBsum" id="3JYP"/>
<dbReference type="PDBsum" id="3JYQ"/>
<dbReference type="SMR" id="Q9X5C9"/>
<dbReference type="STRING" id="196627.cg0504"/>
<dbReference type="KEGG" id="cgb:cg0504"/>
<dbReference type="KEGG" id="cgl:Cgl0424"/>
<dbReference type="PATRIC" id="fig|196627.13.peg.423"/>
<dbReference type="eggNOG" id="COG0169">
    <property type="taxonomic scope" value="Bacteria"/>
</dbReference>
<dbReference type="HOGENOM" id="CLU_044063_4_3_11"/>
<dbReference type="OrthoDB" id="9776868at2"/>
<dbReference type="BioCyc" id="CORYNE:G18NG-9981-MONOMER"/>
<dbReference type="BioCyc" id="MetaCyc:MONOMER-15330"/>
<dbReference type="BRENDA" id="1.1.1.24">
    <property type="organism ID" value="960"/>
</dbReference>
<dbReference type="BRENDA" id="1.1.1.25">
    <property type="organism ID" value="960"/>
</dbReference>
<dbReference type="BRENDA" id="1.1.1.282">
    <property type="organism ID" value="960"/>
</dbReference>
<dbReference type="UniPathway" id="UPA00053">
    <property type="reaction ID" value="UER00087"/>
</dbReference>
<dbReference type="EvolutionaryTrace" id="Q9X5C9"/>
<dbReference type="Proteomes" id="UP000000582">
    <property type="component" value="Chromosome"/>
</dbReference>
<dbReference type="Proteomes" id="UP000001009">
    <property type="component" value="Chromosome"/>
</dbReference>
<dbReference type="GO" id="GO:0005829">
    <property type="term" value="C:cytosol"/>
    <property type="evidence" value="ECO:0007669"/>
    <property type="project" value="TreeGrafter"/>
</dbReference>
<dbReference type="GO" id="GO:0070403">
    <property type="term" value="F:NAD+ binding"/>
    <property type="evidence" value="ECO:0000314"/>
    <property type="project" value="UniProtKB"/>
</dbReference>
<dbReference type="GO" id="GO:0050661">
    <property type="term" value="F:NADP binding"/>
    <property type="evidence" value="ECO:0007669"/>
    <property type="project" value="TreeGrafter"/>
</dbReference>
<dbReference type="GO" id="GO:0030266">
    <property type="term" value="F:quinate 3-dehydrogenase (NAD+) activity"/>
    <property type="evidence" value="ECO:0000314"/>
    <property type="project" value="UniProtKB"/>
</dbReference>
<dbReference type="GO" id="GO:0052734">
    <property type="term" value="F:shikimate 3-dehydrogenase (NAD+) activity"/>
    <property type="evidence" value="ECO:0007669"/>
    <property type="project" value="RHEA"/>
</dbReference>
<dbReference type="GO" id="GO:0004764">
    <property type="term" value="F:shikimate 3-dehydrogenase (NADP+) activity"/>
    <property type="evidence" value="ECO:0007669"/>
    <property type="project" value="UniProtKB-UniRule"/>
</dbReference>
<dbReference type="GO" id="GO:0008652">
    <property type="term" value="P:amino acid biosynthetic process"/>
    <property type="evidence" value="ECO:0007669"/>
    <property type="project" value="UniProtKB-KW"/>
</dbReference>
<dbReference type="GO" id="GO:0009073">
    <property type="term" value="P:aromatic amino acid family biosynthetic process"/>
    <property type="evidence" value="ECO:0007669"/>
    <property type="project" value="UniProtKB-KW"/>
</dbReference>
<dbReference type="GO" id="GO:0009423">
    <property type="term" value="P:chorismate biosynthetic process"/>
    <property type="evidence" value="ECO:0000314"/>
    <property type="project" value="UniProtKB"/>
</dbReference>
<dbReference type="GO" id="GO:0019632">
    <property type="term" value="P:shikimate metabolic process"/>
    <property type="evidence" value="ECO:0000314"/>
    <property type="project" value="UniProtKB"/>
</dbReference>
<dbReference type="CDD" id="cd01065">
    <property type="entry name" value="NAD_bind_Shikimate_DH"/>
    <property type="match status" value="1"/>
</dbReference>
<dbReference type="FunFam" id="3.40.50.720:FF:000086">
    <property type="entry name" value="Quinate/shikimate dehydrogenase"/>
    <property type="match status" value="1"/>
</dbReference>
<dbReference type="Gene3D" id="3.40.50.10860">
    <property type="entry name" value="Leucine Dehydrogenase, chain A, domain 1"/>
    <property type="match status" value="1"/>
</dbReference>
<dbReference type="Gene3D" id="3.40.50.720">
    <property type="entry name" value="NAD(P)-binding Rossmann-like Domain"/>
    <property type="match status" value="1"/>
</dbReference>
<dbReference type="HAMAP" id="MF_00222">
    <property type="entry name" value="Shikimate_DH_AroE"/>
    <property type="match status" value="1"/>
</dbReference>
<dbReference type="InterPro" id="IPR046346">
    <property type="entry name" value="Aminoacid_DH-like_N_sf"/>
</dbReference>
<dbReference type="InterPro" id="IPR036291">
    <property type="entry name" value="NAD(P)-bd_dom_sf"/>
</dbReference>
<dbReference type="InterPro" id="IPR041121">
    <property type="entry name" value="SDH_C"/>
</dbReference>
<dbReference type="InterPro" id="IPR013708">
    <property type="entry name" value="Shikimate_DH-bd_N"/>
</dbReference>
<dbReference type="InterPro" id="IPR022893">
    <property type="entry name" value="Shikimate_DH_fam"/>
</dbReference>
<dbReference type="NCBIfam" id="NF009201">
    <property type="entry name" value="PRK12549.1"/>
    <property type="match status" value="1"/>
</dbReference>
<dbReference type="NCBIfam" id="NF010631">
    <property type="entry name" value="PRK14027.1"/>
    <property type="match status" value="1"/>
</dbReference>
<dbReference type="PANTHER" id="PTHR21089:SF1">
    <property type="entry name" value="BIFUNCTIONAL 3-DEHYDROQUINATE DEHYDRATASE_SHIKIMATE DEHYDROGENASE, CHLOROPLASTIC"/>
    <property type="match status" value="1"/>
</dbReference>
<dbReference type="PANTHER" id="PTHR21089">
    <property type="entry name" value="SHIKIMATE DEHYDROGENASE"/>
    <property type="match status" value="1"/>
</dbReference>
<dbReference type="Pfam" id="PF18317">
    <property type="entry name" value="SDH_C"/>
    <property type="match status" value="1"/>
</dbReference>
<dbReference type="Pfam" id="PF08501">
    <property type="entry name" value="Shikimate_dh_N"/>
    <property type="match status" value="1"/>
</dbReference>
<dbReference type="SUPFAM" id="SSF53223">
    <property type="entry name" value="Aminoacid dehydrogenase-like, N-terminal domain"/>
    <property type="match status" value="1"/>
</dbReference>
<dbReference type="SUPFAM" id="SSF51735">
    <property type="entry name" value="NAD(P)-binding Rossmann-fold domains"/>
    <property type="match status" value="1"/>
</dbReference>
<evidence type="ECO:0000250" key="1">
    <source>
        <dbReference type="UniProtKB" id="A4QB65"/>
    </source>
</evidence>
<evidence type="ECO:0000255" key="2">
    <source>
        <dbReference type="HAMAP-Rule" id="MF_00222"/>
    </source>
</evidence>
<evidence type="ECO:0000269" key="3">
    <source>
    </source>
</evidence>
<evidence type="ECO:0000269" key="4">
    <source>
    </source>
</evidence>
<evidence type="ECO:0000303" key="5">
    <source>
    </source>
</evidence>
<evidence type="ECO:0000303" key="6">
    <source>
    </source>
</evidence>
<evidence type="ECO:0000305" key="7"/>
<evidence type="ECO:0000312" key="8">
    <source>
        <dbReference type="EMBL" id="BAB97817.1"/>
    </source>
</evidence>
<evidence type="ECO:0000312" key="9">
    <source>
        <dbReference type="EMBL" id="CAF19140.1"/>
    </source>
</evidence>
<evidence type="ECO:0007744" key="10">
    <source>
        <dbReference type="PDB" id="2NLO"/>
    </source>
</evidence>
<evidence type="ECO:0007744" key="11">
    <source>
        <dbReference type="PDB" id="3JYO"/>
    </source>
</evidence>
<evidence type="ECO:0007744" key="12">
    <source>
        <dbReference type="PDB" id="3JYP"/>
    </source>
</evidence>
<evidence type="ECO:0007744" key="13">
    <source>
        <dbReference type="PDB" id="3JYQ"/>
    </source>
</evidence>
<evidence type="ECO:0007829" key="14">
    <source>
        <dbReference type="PDB" id="2NLO"/>
    </source>
</evidence>
<evidence type="ECO:0007829" key="15">
    <source>
        <dbReference type="PDB" id="3JYO"/>
    </source>
</evidence>
<gene>
    <name evidence="2" type="primary">aroE</name>
    <name evidence="6" type="synonym">qsuD</name>
    <name evidence="8" type="ordered locus">Cgl0424</name>
    <name evidence="9" type="ordered locus">cg0504</name>
</gene>